<organism>
    <name type="scientific">Arabidopsis thaliana</name>
    <name type="common">Mouse-ear cress</name>
    <dbReference type="NCBI Taxonomy" id="3702"/>
    <lineage>
        <taxon>Eukaryota</taxon>
        <taxon>Viridiplantae</taxon>
        <taxon>Streptophyta</taxon>
        <taxon>Embryophyta</taxon>
        <taxon>Tracheophyta</taxon>
        <taxon>Spermatophyta</taxon>
        <taxon>Magnoliopsida</taxon>
        <taxon>eudicotyledons</taxon>
        <taxon>Gunneridae</taxon>
        <taxon>Pentapetalae</taxon>
        <taxon>rosids</taxon>
        <taxon>malvids</taxon>
        <taxon>Brassicales</taxon>
        <taxon>Brassicaceae</taxon>
        <taxon>Camelineae</taxon>
        <taxon>Arabidopsis</taxon>
    </lineage>
</organism>
<feature type="chain" id="PRO_0000132308" description="NAC domain-containing protein 18">
    <location>
        <begin position="1"/>
        <end position="320"/>
    </location>
</feature>
<feature type="domain" description="NAC" evidence="1">
    <location>
        <begin position="17"/>
        <end position="177"/>
    </location>
</feature>
<feature type="DNA-binding region" evidence="1">
    <location>
        <begin position="118"/>
        <end position="183"/>
    </location>
</feature>
<feature type="region of interest" description="Disordered" evidence="2">
    <location>
        <begin position="1"/>
        <end position="22"/>
    </location>
</feature>
<feature type="compositionally biased region" description="Pro residues" evidence="2">
    <location>
        <begin position="9"/>
        <end position="18"/>
    </location>
</feature>
<feature type="sequence conflict" description="In Ref. 4; AAM20637/AAN15611." evidence="6" ref="4">
    <original>D</original>
    <variation>G</variation>
    <location>
        <position position="206"/>
    </location>
</feature>
<protein>
    <recommendedName>
        <fullName>NAC domain-containing protein 18</fullName>
        <shortName>ANAC018</shortName>
    </recommendedName>
    <alternativeName>
        <fullName evidence="5">Protein NAC-REGULATED SEED MORPHOLOGY 2</fullName>
    </alternativeName>
    <alternativeName>
        <fullName>Protein NO APICAL MERISTEM</fullName>
        <shortName>AtNAM</shortName>
    </alternativeName>
</protein>
<comment type="function">
    <text evidence="4 6">May encode a transcription factor involved in the elaboration of shoot apical meristems (SAM) (Probable). Together with NAC056/NARS1, regulates embryogenesis by regulating the development and degeneration of ovule integuments, a process required for intertissue communication between the embryo and the maternal integument (PubMed:18849494).</text>
</comment>
<comment type="subcellular location">
    <subcellularLocation>
        <location evidence="4">Nucleus</location>
    </subcellularLocation>
</comment>
<comment type="tissue specificity">
    <text evidence="3 4">Restricted primarily to the region of the embryo including the SAM (PubMed:12175016). Expressed in the outer integument, but seems not expressed in the embryo at the torpedo stage (PubMed:18849494).</text>
</comment>
<comment type="domain">
    <text evidence="1">The NAC domain includes a DNA binding domain and a dimerization domain.</text>
</comment>
<comment type="disruption phenotype">
    <text evidence="4">When associated with disruption in NAC056/NARS1, abnormally shaped seeds, defect in embryogenesis arrested at the torpedo-shaped embryo stage, markedly delayed integuments degeneration, and delay of silique senescence.</text>
</comment>
<keyword id="KW-0238">DNA-binding</keyword>
<keyword id="KW-0539">Nucleus</keyword>
<keyword id="KW-1185">Reference proteome</keyword>
<keyword id="KW-0804">Transcription</keyword>
<keyword id="KW-0805">Transcription regulation</keyword>
<gene>
    <name type="primary">NAC018</name>
    <name type="synonym">NAM</name>
    <name evidence="5" type="synonym">NARS2</name>
    <name type="ordered locus">At1g52880</name>
    <name type="ORF">F14G24.15</name>
</gene>
<evidence type="ECO:0000255" key="1">
    <source>
        <dbReference type="PROSITE-ProRule" id="PRU00353"/>
    </source>
</evidence>
<evidence type="ECO:0000256" key="2">
    <source>
        <dbReference type="SAM" id="MobiDB-lite"/>
    </source>
</evidence>
<evidence type="ECO:0000269" key="3">
    <source>
    </source>
</evidence>
<evidence type="ECO:0000269" key="4">
    <source>
    </source>
</evidence>
<evidence type="ECO:0000303" key="5">
    <source>
    </source>
</evidence>
<evidence type="ECO:0000305" key="6"/>
<dbReference type="EMBL" id="AF123310">
    <property type="protein sequence ID" value="AAD17313.1"/>
    <property type="molecule type" value="Genomic_DNA"/>
</dbReference>
<dbReference type="EMBL" id="AF123311">
    <property type="protein sequence ID" value="AAD17314.1"/>
    <property type="molecule type" value="mRNA"/>
</dbReference>
<dbReference type="EMBL" id="AC019018">
    <property type="protein sequence ID" value="AAG52280.1"/>
    <property type="molecule type" value="Genomic_DNA"/>
</dbReference>
<dbReference type="EMBL" id="CP002684">
    <property type="protein sequence ID" value="AEE32863.1"/>
    <property type="molecule type" value="Genomic_DNA"/>
</dbReference>
<dbReference type="EMBL" id="AY099786">
    <property type="protein sequence ID" value="AAM20637.1"/>
    <property type="molecule type" value="mRNA"/>
</dbReference>
<dbReference type="EMBL" id="BT000292">
    <property type="protein sequence ID" value="AAN15611.1"/>
    <property type="molecule type" value="mRNA"/>
</dbReference>
<dbReference type="EMBL" id="AY086093">
    <property type="protein sequence ID" value="AAM63301.1"/>
    <property type="molecule type" value="mRNA"/>
</dbReference>
<dbReference type="PIR" id="A96570">
    <property type="entry name" value="A96570"/>
</dbReference>
<dbReference type="RefSeq" id="NP_175696.1">
    <property type="nucleotide sequence ID" value="NM_104166.3"/>
</dbReference>
<dbReference type="SMR" id="Q9ZNU2"/>
<dbReference type="BioGRID" id="26946">
    <property type="interactions" value="13"/>
</dbReference>
<dbReference type="FunCoup" id="Q9ZNU2">
    <property type="interactions" value="2"/>
</dbReference>
<dbReference type="STRING" id="3702.Q9ZNU2"/>
<dbReference type="iPTMnet" id="Q9ZNU2"/>
<dbReference type="PaxDb" id="3702-AT1G52880.1"/>
<dbReference type="ProteomicsDB" id="251233"/>
<dbReference type="EnsemblPlants" id="AT1G52880.1">
    <property type="protein sequence ID" value="AT1G52880.1"/>
    <property type="gene ID" value="AT1G52880"/>
</dbReference>
<dbReference type="GeneID" id="841721"/>
<dbReference type="Gramene" id="AT1G52880.1">
    <property type="protein sequence ID" value="AT1G52880.1"/>
    <property type="gene ID" value="AT1G52880"/>
</dbReference>
<dbReference type="KEGG" id="ath:AT1G52880"/>
<dbReference type="Araport" id="AT1G52880"/>
<dbReference type="TAIR" id="AT1G52880">
    <property type="gene designation" value="NAM"/>
</dbReference>
<dbReference type="eggNOG" id="ENOG502QRBC">
    <property type="taxonomic scope" value="Eukaryota"/>
</dbReference>
<dbReference type="HOGENOM" id="CLU_035664_8_1_1"/>
<dbReference type="InParanoid" id="Q9ZNU2"/>
<dbReference type="OMA" id="KPTHICD"/>
<dbReference type="OrthoDB" id="1921961at2759"/>
<dbReference type="PhylomeDB" id="Q9ZNU2"/>
<dbReference type="PRO" id="PR:Q9ZNU2"/>
<dbReference type="Proteomes" id="UP000006548">
    <property type="component" value="Chromosome 1"/>
</dbReference>
<dbReference type="ExpressionAtlas" id="Q9ZNU2">
    <property type="expression patterns" value="baseline and differential"/>
</dbReference>
<dbReference type="GO" id="GO:0005634">
    <property type="term" value="C:nucleus"/>
    <property type="evidence" value="ECO:0000314"/>
    <property type="project" value="UniProtKB"/>
</dbReference>
<dbReference type="GO" id="GO:0003700">
    <property type="term" value="F:DNA-binding transcription factor activity"/>
    <property type="evidence" value="ECO:0000314"/>
    <property type="project" value="TAIR"/>
</dbReference>
<dbReference type="GO" id="GO:0000976">
    <property type="term" value="F:transcription cis-regulatory region binding"/>
    <property type="evidence" value="ECO:0000353"/>
    <property type="project" value="TAIR"/>
</dbReference>
<dbReference type="GO" id="GO:0080060">
    <property type="term" value="P:integument development"/>
    <property type="evidence" value="ECO:0000315"/>
    <property type="project" value="UniProtKB"/>
</dbReference>
<dbReference type="GO" id="GO:0045995">
    <property type="term" value="P:regulation of embryonic development"/>
    <property type="evidence" value="ECO:0000315"/>
    <property type="project" value="UniProtKB"/>
</dbReference>
<dbReference type="GO" id="GO:0048317">
    <property type="term" value="P:seed morphogenesis"/>
    <property type="evidence" value="ECO:0000315"/>
    <property type="project" value="UniProtKB"/>
</dbReference>
<dbReference type="FunFam" id="2.170.150.80:FF:000005">
    <property type="entry name" value="NAC transcription factor 56"/>
    <property type="match status" value="1"/>
</dbReference>
<dbReference type="Gene3D" id="2.170.150.80">
    <property type="entry name" value="NAC domain"/>
    <property type="match status" value="1"/>
</dbReference>
<dbReference type="InterPro" id="IPR003441">
    <property type="entry name" value="NAC-dom"/>
</dbReference>
<dbReference type="InterPro" id="IPR036093">
    <property type="entry name" value="NAC_dom_sf"/>
</dbReference>
<dbReference type="PANTHER" id="PTHR31719:SF130">
    <property type="entry name" value="NAC DOMAIN-CONTAINING PROTEIN 18"/>
    <property type="match status" value="1"/>
</dbReference>
<dbReference type="PANTHER" id="PTHR31719">
    <property type="entry name" value="NAC TRANSCRIPTION FACTOR 56"/>
    <property type="match status" value="1"/>
</dbReference>
<dbReference type="Pfam" id="PF02365">
    <property type="entry name" value="NAM"/>
    <property type="match status" value="1"/>
</dbReference>
<dbReference type="SUPFAM" id="SSF101941">
    <property type="entry name" value="NAC domain"/>
    <property type="match status" value="1"/>
</dbReference>
<dbReference type="PROSITE" id="PS51005">
    <property type="entry name" value="NAC"/>
    <property type="match status" value="1"/>
</dbReference>
<reference key="1">
    <citation type="journal article" date="2002" name="Plant Mol. Biol.">
        <title>Molecular characterization of AtNAM: a member of the Arabidopsis NAC domain superfamily.</title>
        <authorList>
            <person name="Duval M."/>
            <person name="Hsieh T.-F."/>
            <person name="Kim S.Y."/>
            <person name="Thomas T.L."/>
        </authorList>
    </citation>
    <scope>NUCLEOTIDE SEQUENCE [MRNA]</scope>
    <scope>TISSUE SPECIFICITY</scope>
    <source>
        <strain>cv. Landsberg erecta</strain>
    </source>
</reference>
<reference key="2">
    <citation type="journal article" date="2000" name="Nature">
        <title>Sequence and analysis of chromosome 1 of the plant Arabidopsis thaliana.</title>
        <authorList>
            <person name="Theologis A."/>
            <person name="Ecker J.R."/>
            <person name="Palm C.J."/>
            <person name="Federspiel N.A."/>
            <person name="Kaul S."/>
            <person name="White O."/>
            <person name="Alonso J."/>
            <person name="Altafi H."/>
            <person name="Araujo R."/>
            <person name="Bowman C.L."/>
            <person name="Brooks S.Y."/>
            <person name="Buehler E."/>
            <person name="Chan A."/>
            <person name="Chao Q."/>
            <person name="Chen H."/>
            <person name="Cheuk R.F."/>
            <person name="Chin C.W."/>
            <person name="Chung M.K."/>
            <person name="Conn L."/>
            <person name="Conway A.B."/>
            <person name="Conway A.R."/>
            <person name="Creasy T.H."/>
            <person name="Dewar K."/>
            <person name="Dunn P."/>
            <person name="Etgu P."/>
            <person name="Feldblyum T.V."/>
            <person name="Feng J.-D."/>
            <person name="Fong B."/>
            <person name="Fujii C.Y."/>
            <person name="Gill J.E."/>
            <person name="Goldsmith A.D."/>
            <person name="Haas B."/>
            <person name="Hansen N.F."/>
            <person name="Hughes B."/>
            <person name="Huizar L."/>
            <person name="Hunter J.L."/>
            <person name="Jenkins J."/>
            <person name="Johnson-Hopson C."/>
            <person name="Khan S."/>
            <person name="Khaykin E."/>
            <person name="Kim C.J."/>
            <person name="Koo H.L."/>
            <person name="Kremenetskaia I."/>
            <person name="Kurtz D.B."/>
            <person name="Kwan A."/>
            <person name="Lam B."/>
            <person name="Langin-Hooper S."/>
            <person name="Lee A."/>
            <person name="Lee J.M."/>
            <person name="Lenz C.A."/>
            <person name="Li J.H."/>
            <person name="Li Y.-P."/>
            <person name="Lin X."/>
            <person name="Liu S.X."/>
            <person name="Liu Z.A."/>
            <person name="Luros J.S."/>
            <person name="Maiti R."/>
            <person name="Marziali A."/>
            <person name="Militscher J."/>
            <person name="Miranda M."/>
            <person name="Nguyen M."/>
            <person name="Nierman W.C."/>
            <person name="Osborne B.I."/>
            <person name="Pai G."/>
            <person name="Peterson J."/>
            <person name="Pham P.K."/>
            <person name="Rizzo M."/>
            <person name="Rooney T."/>
            <person name="Rowley D."/>
            <person name="Sakano H."/>
            <person name="Salzberg S.L."/>
            <person name="Schwartz J.R."/>
            <person name="Shinn P."/>
            <person name="Southwick A.M."/>
            <person name="Sun H."/>
            <person name="Tallon L.J."/>
            <person name="Tambunga G."/>
            <person name="Toriumi M.J."/>
            <person name="Town C.D."/>
            <person name="Utterback T."/>
            <person name="Van Aken S."/>
            <person name="Vaysberg M."/>
            <person name="Vysotskaia V.S."/>
            <person name="Walker M."/>
            <person name="Wu D."/>
            <person name="Yu G."/>
            <person name="Fraser C.M."/>
            <person name="Venter J.C."/>
            <person name="Davis R.W."/>
        </authorList>
    </citation>
    <scope>NUCLEOTIDE SEQUENCE [LARGE SCALE GENOMIC DNA]</scope>
    <source>
        <strain>cv. Columbia</strain>
    </source>
</reference>
<reference key="3">
    <citation type="journal article" date="2017" name="Plant J.">
        <title>Araport11: a complete reannotation of the Arabidopsis thaliana reference genome.</title>
        <authorList>
            <person name="Cheng C.Y."/>
            <person name="Krishnakumar V."/>
            <person name="Chan A.P."/>
            <person name="Thibaud-Nissen F."/>
            <person name="Schobel S."/>
            <person name="Town C.D."/>
        </authorList>
    </citation>
    <scope>GENOME REANNOTATION</scope>
    <source>
        <strain>cv. Columbia</strain>
    </source>
</reference>
<reference key="4">
    <citation type="journal article" date="2003" name="Science">
        <title>Empirical analysis of transcriptional activity in the Arabidopsis genome.</title>
        <authorList>
            <person name="Yamada K."/>
            <person name="Lim J."/>
            <person name="Dale J.M."/>
            <person name="Chen H."/>
            <person name="Shinn P."/>
            <person name="Palm C.J."/>
            <person name="Southwick A.M."/>
            <person name="Wu H.C."/>
            <person name="Kim C.J."/>
            <person name="Nguyen M."/>
            <person name="Pham P.K."/>
            <person name="Cheuk R.F."/>
            <person name="Karlin-Newmann G."/>
            <person name="Liu S.X."/>
            <person name="Lam B."/>
            <person name="Sakano H."/>
            <person name="Wu T."/>
            <person name="Yu G."/>
            <person name="Miranda M."/>
            <person name="Quach H.L."/>
            <person name="Tripp M."/>
            <person name="Chang C.H."/>
            <person name="Lee J.M."/>
            <person name="Toriumi M.J."/>
            <person name="Chan M.M."/>
            <person name="Tang C.C."/>
            <person name="Onodera C.S."/>
            <person name="Deng J.M."/>
            <person name="Akiyama K."/>
            <person name="Ansari Y."/>
            <person name="Arakawa T."/>
            <person name="Banh J."/>
            <person name="Banno F."/>
            <person name="Bowser L."/>
            <person name="Brooks S.Y."/>
            <person name="Carninci P."/>
            <person name="Chao Q."/>
            <person name="Choy N."/>
            <person name="Enju A."/>
            <person name="Goldsmith A.D."/>
            <person name="Gurjal M."/>
            <person name="Hansen N.F."/>
            <person name="Hayashizaki Y."/>
            <person name="Johnson-Hopson C."/>
            <person name="Hsuan V.W."/>
            <person name="Iida K."/>
            <person name="Karnes M."/>
            <person name="Khan S."/>
            <person name="Koesema E."/>
            <person name="Ishida J."/>
            <person name="Jiang P.X."/>
            <person name="Jones T."/>
            <person name="Kawai J."/>
            <person name="Kamiya A."/>
            <person name="Meyers C."/>
            <person name="Nakajima M."/>
            <person name="Narusaka M."/>
            <person name="Seki M."/>
            <person name="Sakurai T."/>
            <person name="Satou M."/>
            <person name="Tamse R."/>
            <person name="Vaysberg M."/>
            <person name="Wallender E.K."/>
            <person name="Wong C."/>
            <person name="Yamamura Y."/>
            <person name="Yuan S."/>
            <person name="Shinozaki K."/>
            <person name="Davis R.W."/>
            <person name="Theologis A."/>
            <person name="Ecker J.R."/>
        </authorList>
    </citation>
    <scope>NUCLEOTIDE SEQUENCE [LARGE SCALE MRNA]</scope>
    <source>
        <strain>cv. Columbia</strain>
    </source>
</reference>
<reference key="5">
    <citation type="submission" date="2002-03" db="EMBL/GenBank/DDBJ databases">
        <title>Full-length cDNA from Arabidopsis thaliana.</title>
        <authorList>
            <person name="Brover V.V."/>
            <person name="Troukhan M.E."/>
            <person name="Alexandrov N.A."/>
            <person name="Lu Y.-P."/>
            <person name="Flavell R.B."/>
            <person name="Feldmann K.A."/>
        </authorList>
    </citation>
    <scope>NUCLEOTIDE SEQUENCE [LARGE SCALE MRNA]</scope>
</reference>
<reference key="6">
    <citation type="journal article" date="2003" name="DNA Res.">
        <title>Comprehensive analysis of NAC family genes in Oryza sativa and Arabidopsis thaliana.</title>
        <authorList>
            <person name="Ooka H."/>
            <person name="Satoh K."/>
            <person name="Doi K."/>
            <person name="Nagata T."/>
            <person name="Otomo Y."/>
            <person name="Murakami K."/>
            <person name="Matsubara K."/>
            <person name="Osato N."/>
            <person name="Kawai J."/>
            <person name="Carninci P."/>
            <person name="Hayashizaki Y."/>
            <person name="Suzuki K."/>
            <person name="Kojima K."/>
            <person name="Takahara Y."/>
            <person name="Yamamoto K."/>
            <person name="Kikuchi S."/>
        </authorList>
    </citation>
    <scope>GENE FAMILY</scope>
    <scope>NOMENCLATURE</scope>
</reference>
<reference key="7">
    <citation type="journal article" date="2008" name="Plant Cell">
        <title>NAC family proteins NARS1/NAC2 and NARS2/NAM in the outer integument regulate embryogenesis in Arabidopsis.</title>
        <authorList>
            <person name="Kunieda T."/>
            <person name="Mitsuda N."/>
            <person name="Ohme-Takagi M."/>
            <person name="Takeda S."/>
            <person name="Aida M."/>
            <person name="Tasaka M."/>
            <person name="Kondo M."/>
            <person name="Nishimura M."/>
            <person name="Hara-Nishimura I."/>
        </authorList>
    </citation>
    <scope>FUNCTION</scope>
    <scope>DISRUPTION PHENOTYPE</scope>
    <scope>SUBCELLULAR LOCATION</scope>
    <scope>TISSUE SPECIFICITY</scope>
    <source>
        <strain>cv. Columbia</strain>
    </source>
</reference>
<proteinExistence type="evidence at transcript level"/>
<sequence>MESTDSSGGPPPPQPNLPPGFRFHPTDEELVIHYLKRKADSVPLPVAIIADVDLYKFDPWELPAKASFGEQEWYFFSPRDRKYPNGARPNRAATSGYWKATGTDKPVISTGGGGSKKVGVKKALVFYSGKPPKGVKSDWIMHEYRLTDNKPTHICDFGNKKNSLRLDDWVLCRIYKKNNSTASRHHHHLHHIHLDNDHHRHDMMIDDDRFRHVPPGLHFPAIFSDNNDPTAIYDGGGGGYGGGSYSMNHCFASGSKQEQLFPPVMMMTSLNQDSGIGSSSSPSKRFNGGGVGDCSTSMAATPLMQNQGGIYQLPGLNWYS</sequence>
<accession>Q9ZNU2</accession>
<accession>Q8LDB9</accession>
<accession>Q8LPH5</accession>
<name>NAC18_ARATH</name>